<dbReference type="EMBL" id="Z28592">
    <property type="protein sequence ID" value="CAA82255.1"/>
    <property type="molecule type" value="Genomic_DNA"/>
</dbReference>
<dbReference type="EMBL" id="AL009126">
    <property type="protein sequence ID" value="CAB15703.1"/>
    <property type="molecule type" value="Genomic_DNA"/>
</dbReference>
<dbReference type="PIR" id="I40363">
    <property type="entry name" value="I40363"/>
</dbReference>
<dbReference type="RefSeq" id="NP_391567.1">
    <property type="nucleotide sequence ID" value="NC_000964.3"/>
</dbReference>
<dbReference type="RefSeq" id="WP_003151167.1">
    <property type="nucleotide sequence ID" value="NZ_OZ025638.1"/>
</dbReference>
<dbReference type="SMR" id="P37815"/>
<dbReference type="FunCoup" id="P37815">
    <property type="interactions" value="450"/>
</dbReference>
<dbReference type="IntAct" id="P37815">
    <property type="interactions" value="2"/>
</dbReference>
<dbReference type="STRING" id="224308.BSU36860"/>
<dbReference type="PaxDb" id="224308-BSU36860"/>
<dbReference type="EnsemblBacteria" id="CAB15703">
    <property type="protein sequence ID" value="CAB15703"/>
    <property type="gene ID" value="BSU_36860"/>
</dbReference>
<dbReference type="GeneID" id="93082546"/>
<dbReference type="GeneID" id="936999"/>
<dbReference type="KEGG" id="bsu:BSU36860"/>
<dbReference type="PATRIC" id="fig|224308.179.peg.3993"/>
<dbReference type="eggNOG" id="COG0636">
    <property type="taxonomic scope" value="Bacteria"/>
</dbReference>
<dbReference type="InParanoid" id="P37815"/>
<dbReference type="OrthoDB" id="2357540at2"/>
<dbReference type="PhylomeDB" id="P37815"/>
<dbReference type="BioCyc" id="BSUB:BSU36860-MONOMER"/>
<dbReference type="PRO" id="PR:P37815"/>
<dbReference type="Proteomes" id="UP000001570">
    <property type="component" value="Chromosome"/>
</dbReference>
<dbReference type="GO" id="GO:0005886">
    <property type="term" value="C:plasma membrane"/>
    <property type="evidence" value="ECO:0007669"/>
    <property type="project" value="UniProtKB-SubCell"/>
</dbReference>
<dbReference type="GO" id="GO:0045259">
    <property type="term" value="C:proton-transporting ATP synthase complex"/>
    <property type="evidence" value="ECO:0007669"/>
    <property type="project" value="UniProtKB-KW"/>
</dbReference>
<dbReference type="GO" id="GO:0033177">
    <property type="term" value="C:proton-transporting two-sector ATPase complex, proton-transporting domain"/>
    <property type="evidence" value="ECO:0007669"/>
    <property type="project" value="InterPro"/>
</dbReference>
<dbReference type="GO" id="GO:0008289">
    <property type="term" value="F:lipid binding"/>
    <property type="evidence" value="ECO:0007669"/>
    <property type="project" value="UniProtKB-KW"/>
</dbReference>
<dbReference type="GO" id="GO:0046933">
    <property type="term" value="F:proton-transporting ATP synthase activity, rotational mechanism"/>
    <property type="evidence" value="ECO:0007669"/>
    <property type="project" value="UniProtKB-UniRule"/>
</dbReference>
<dbReference type="GO" id="GO:0015986">
    <property type="term" value="P:proton motive force-driven ATP synthesis"/>
    <property type="evidence" value="ECO:0000318"/>
    <property type="project" value="GO_Central"/>
</dbReference>
<dbReference type="CDD" id="cd18185">
    <property type="entry name" value="ATP-synt_Fo_c_ATPE"/>
    <property type="match status" value="1"/>
</dbReference>
<dbReference type="FunFam" id="1.20.20.10:FF:000004">
    <property type="entry name" value="ATP synthase subunit c"/>
    <property type="match status" value="1"/>
</dbReference>
<dbReference type="Gene3D" id="1.20.20.10">
    <property type="entry name" value="F1F0 ATP synthase subunit C"/>
    <property type="match status" value="1"/>
</dbReference>
<dbReference type="HAMAP" id="MF_01396">
    <property type="entry name" value="ATP_synth_c_bact"/>
    <property type="match status" value="1"/>
</dbReference>
<dbReference type="InterPro" id="IPR005953">
    <property type="entry name" value="ATP_synth_csu_bac/chlpt"/>
</dbReference>
<dbReference type="InterPro" id="IPR000454">
    <property type="entry name" value="ATP_synth_F0_csu"/>
</dbReference>
<dbReference type="InterPro" id="IPR020537">
    <property type="entry name" value="ATP_synth_F0_csu_DDCD_BS"/>
</dbReference>
<dbReference type="InterPro" id="IPR038662">
    <property type="entry name" value="ATP_synth_F0_csu_sf"/>
</dbReference>
<dbReference type="InterPro" id="IPR002379">
    <property type="entry name" value="ATPase_proteolipid_c-like_dom"/>
</dbReference>
<dbReference type="InterPro" id="IPR035921">
    <property type="entry name" value="F/V-ATP_Csub_sf"/>
</dbReference>
<dbReference type="NCBIfam" id="TIGR01260">
    <property type="entry name" value="ATP_synt_c"/>
    <property type="match status" value="1"/>
</dbReference>
<dbReference type="NCBIfam" id="NF005363">
    <property type="entry name" value="PRK06876.1"/>
    <property type="match status" value="1"/>
</dbReference>
<dbReference type="PANTHER" id="PTHR10031">
    <property type="entry name" value="ATP SYNTHASE LIPID-BINDING PROTEIN, MITOCHONDRIAL"/>
    <property type="match status" value="1"/>
</dbReference>
<dbReference type="PANTHER" id="PTHR10031:SF0">
    <property type="entry name" value="ATPASE PROTEIN 9"/>
    <property type="match status" value="1"/>
</dbReference>
<dbReference type="Pfam" id="PF00137">
    <property type="entry name" value="ATP-synt_C"/>
    <property type="match status" value="1"/>
</dbReference>
<dbReference type="PRINTS" id="PR00124">
    <property type="entry name" value="ATPASEC"/>
</dbReference>
<dbReference type="SUPFAM" id="SSF81333">
    <property type="entry name" value="F1F0 ATP synthase subunit C"/>
    <property type="match status" value="1"/>
</dbReference>
<dbReference type="PROSITE" id="PS00605">
    <property type="entry name" value="ATPASE_C"/>
    <property type="match status" value="1"/>
</dbReference>
<protein>
    <recommendedName>
        <fullName evidence="1">ATP synthase subunit c</fullName>
    </recommendedName>
    <alternativeName>
        <fullName evidence="1">ATP synthase F(0) sector subunit c</fullName>
    </alternativeName>
    <alternativeName>
        <fullName evidence="1">F-type ATPase subunit c</fullName>
        <shortName evidence="1">F-ATPase subunit c</shortName>
    </alternativeName>
    <alternativeName>
        <fullName evidence="1">Lipid-binding protein</fullName>
    </alternativeName>
</protein>
<comment type="function">
    <text evidence="1">F(1)F(0) ATP synthase produces ATP from ADP in the presence of a proton or sodium gradient. F-type ATPases consist of two structural domains, F(1) containing the extramembraneous catalytic core and F(0) containing the membrane proton channel, linked together by a central stalk and a peripheral stalk. During catalysis, ATP synthesis in the catalytic domain of F(1) is coupled via a rotary mechanism of the central stalk subunits to proton translocation.</text>
</comment>
<comment type="function">
    <text evidence="1">Key component of the F(0) channel; it plays a direct role in translocation across the membrane. A homomeric c-ring of between 10-14 subunits forms the central stalk rotor element with the F(1) delta and epsilon subunits.</text>
</comment>
<comment type="subunit">
    <text evidence="1 2 3">F-type ATPases have 2 components, F(1) - the catalytic core - and F(0) - the membrane proton channel. F(1) has five subunits: alpha(3), beta(3), gamma(1), delta(1), epsilon(1). F(0) has three main subunits: a(1), b(2) and c(10-14). The alpha and beta chains form an alternating ring which encloses part of the gamma chain. F(1) is attached to F(0) by a central stalk formed by the gamma and epsilon chains, while a peripheral stalk is formed by the delta and b chains (Probable). The F(1)F(0) complex interacts with SpoIIIJ and YqjG; YqgA is found in the same complex.</text>
</comment>
<comment type="subcellular location">
    <subcellularLocation>
        <location evidence="1">Cell membrane</location>
        <topology evidence="1">Multi-pass membrane protein</topology>
    </subcellularLocation>
</comment>
<comment type="similarity">
    <text evidence="1">Belongs to the ATPase C chain family.</text>
</comment>
<sequence length="70" mass="7094">MNLIAAAIAIGLGALGAGIGNGLIVSRTVEGIARQPEAGKELRTLMFMGIALVEALPIIAVVIAFLAFFG</sequence>
<keyword id="KW-0066">ATP synthesis</keyword>
<keyword id="KW-1003">Cell membrane</keyword>
<keyword id="KW-0138">CF(0)</keyword>
<keyword id="KW-0375">Hydrogen ion transport</keyword>
<keyword id="KW-0406">Ion transport</keyword>
<keyword id="KW-0446">Lipid-binding</keyword>
<keyword id="KW-0472">Membrane</keyword>
<keyword id="KW-1185">Reference proteome</keyword>
<keyword id="KW-0812">Transmembrane</keyword>
<keyword id="KW-1133">Transmembrane helix</keyword>
<keyword id="KW-0813">Transport</keyword>
<proteinExistence type="evidence at protein level"/>
<evidence type="ECO:0000255" key="1">
    <source>
        <dbReference type="HAMAP-Rule" id="MF_01396"/>
    </source>
</evidence>
<evidence type="ECO:0000269" key="2">
    <source>
    </source>
</evidence>
<evidence type="ECO:0000305" key="3"/>
<feature type="chain" id="PRO_0000112139" description="ATP synthase subunit c">
    <location>
        <begin position="1"/>
        <end position="70"/>
    </location>
</feature>
<feature type="transmembrane region" description="Helical" evidence="1">
    <location>
        <begin position="4"/>
        <end position="24"/>
    </location>
</feature>
<feature type="transmembrane region" description="Helical" evidence="1">
    <location>
        <begin position="49"/>
        <end position="69"/>
    </location>
</feature>
<feature type="site" description="Reversibly protonated during proton transport" evidence="1">
    <location>
        <position position="54"/>
    </location>
</feature>
<gene>
    <name evidence="1" type="primary">atpE</name>
    <name type="ordered locus">BSU36860</name>
</gene>
<name>ATPL_BACSU</name>
<reference key="1">
    <citation type="journal article" date="1994" name="J. Bacteriol.">
        <title>Bacillus subtilis F0F1 ATPase: DNA sequence of the atp operon and characterization of atp mutants.</title>
        <authorList>
            <person name="Santana M."/>
            <person name="Ionescu M.S."/>
            <person name="Vertes A."/>
            <person name="Longin R."/>
            <person name="Kunst F."/>
            <person name="Danchin A."/>
            <person name="Glaser P."/>
        </authorList>
    </citation>
    <scope>NUCLEOTIDE SEQUENCE [GENOMIC DNA]</scope>
    <source>
        <strain>168</strain>
    </source>
</reference>
<reference key="2">
    <citation type="journal article" date="1997" name="Nature">
        <title>The complete genome sequence of the Gram-positive bacterium Bacillus subtilis.</title>
        <authorList>
            <person name="Kunst F."/>
            <person name="Ogasawara N."/>
            <person name="Moszer I."/>
            <person name="Albertini A.M."/>
            <person name="Alloni G."/>
            <person name="Azevedo V."/>
            <person name="Bertero M.G."/>
            <person name="Bessieres P."/>
            <person name="Bolotin A."/>
            <person name="Borchert S."/>
            <person name="Borriss R."/>
            <person name="Boursier L."/>
            <person name="Brans A."/>
            <person name="Braun M."/>
            <person name="Brignell S.C."/>
            <person name="Bron S."/>
            <person name="Brouillet S."/>
            <person name="Bruschi C.V."/>
            <person name="Caldwell B."/>
            <person name="Capuano V."/>
            <person name="Carter N.M."/>
            <person name="Choi S.-K."/>
            <person name="Codani J.-J."/>
            <person name="Connerton I.F."/>
            <person name="Cummings N.J."/>
            <person name="Daniel R.A."/>
            <person name="Denizot F."/>
            <person name="Devine K.M."/>
            <person name="Duesterhoeft A."/>
            <person name="Ehrlich S.D."/>
            <person name="Emmerson P.T."/>
            <person name="Entian K.-D."/>
            <person name="Errington J."/>
            <person name="Fabret C."/>
            <person name="Ferrari E."/>
            <person name="Foulger D."/>
            <person name="Fritz C."/>
            <person name="Fujita M."/>
            <person name="Fujita Y."/>
            <person name="Fuma S."/>
            <person name="Galizzi A."/>
            <person name="Galleron N."/>
            <person name="Ghim S.-Y."/>
            <person name="Glaser P."/>
            <person name="Goffeau A."/>
            <person name="Golightly E.J."/>
            <person name="Grandi G."/>
            <person name="Guiseppi G."/>
            <person name="Guy B.J."/>
            <person name="Haga K."/>
            <person name="Haiech J."/>
            <person name="Harwood C.R."/>
            <person name="Henaut A."/>
            <person name="Hilbert H."/>
            <person name="Holsappel S."/>
            <person name="Hosono S."/>
            <person name="Hullo M.-F."/>
            <person name="Itaya M."/>
            <person name="Jones L.-M."/>
            <person name="Joris B."/>
            <person name="Karamata D."/>
            <person name="Kasahara Y."/>
            <person name="Klaerr-Blanchard M."/>
            <person name="Klein C."/>
            <person name="Kobayashi Y."/>
            <person name="Koetter P."/>
            <person name="Koningstein G."/>
            <person name="Krogh S."/>
            <person name="Kumano M."/>
            <person name="Kurita K."/>
            <person name="Lapidus A."/>
            <person name="Lardinois S."/>
            <person name="Lauber J."/>
            <person name="Lazarevic V."/>
            <person name="Lee S.-M."/>
            <person name="Levine A."/>
            <person name="Liu H."/>
            <person name="Masuda S."/>
            <person name="Mauel C."/>
            <person name="Medigue C."/>
            <person name="Medina N."/>
            <person name="Mellado R.P."/>
            <person name="Mizuno M."/>
            <person name="Moestl D."/>
            <person name="Nakai S."/>
            <person name="Noback M."/>
            <person name="Noone D."/>
            <person name="O'Reilly M."/>
            <person name="Ogawa K."/>
            <person name="Ogiwara A."/>
            <person name="Oudega B."/>
            <person name="Park S.-H."/>
            <person name="Parro V."/>
            <person name="Pohl T.M."/>
            <person name="Portetelle D."/>
            <person name="Porwollik S."/>
            <person name="Prescott A.M."/>
            <person name="Presecan E."/>
            <person name="Pujic P."/>
            <person name="Purnelle B."/>
            <person name="Rapoport G."/>
            <person name="Rey M."/>
            <person name="Reynolds S."/>
            <person name="Rieger M."/>
            <person name="Rivolta C."/>
            <person name="Rocha E."/>
            <person name="Roche B."/>
            <person name="Rose M."/>
            <person name="Sadaie Y."/>
            <person name="Sato T."/>
            <person name="Scanlan E."/>
            <person name="Schleich S."/>
            <person name="Schroeter R."/>
            <person name="Scoffone F."/>
            <person name="Sekiguchi J."/>
            <person name="Sekowska A."/>
            <person name="Seror S.J."/>
            <person name="Serror P."/>
            <person name="Shin B.-S."/>
            <person name="Soldo B."/>
            <person name="Sorokin A."/>
            <person name="Tacconi E."/>
            <person name="Takagi T."/>
            <person name="Takahashi H."/>
            <person name="Takemaru K."/>
            <person name="Takeuchi M."/>
            <person name="Tamakoshi A."/>
            <person name="Tanaka T."/>
            <person name="Terpstra P."/>
            <person name="Tognoni A."/>
            <person name="Tosato V."/>
            <person name="Uchiyama S."/>
            <person name="Vandenbol M."/>
            <person name="Vannier F."/>
            <person name="Vassarotti A."/>
            <person name="Viari A."/>
            <person name="Wambutt R."/>
            <person name="Wedler E."/>
            <person name="Wedler H."/>
            <person name="Weitzenegger T."/>
            <person name="Winters P."/>
            <person name="Wipat A."/>
            <person name="Yamamoto H."/>
            <person name="Yamane K."/>
            <person name="Yasumoto K."/>
            <person name="Yata K."/>
            <person name="Yoshida K."/>
            <person name="Yoshikawa H.-F."/>
            <person name="Zumstein E."/>
            <person name="Yoshikawa H."/>
            <person name="Danchin A."/>
        </authorList>
    </citation>
    <scope>NUCLEOTIDE SEQUENCE [LARGE SCALE GENOMIC DNA]</scope>
    <source>
        <strain>168</strain>
    </source>
</reference>
<reference key="3">
    <citation type="journal article" date="2009" name="J. Bacteriol.">
        <title>Bacillus subtilis SpoIIIJ and YqjG function in membrane protein biogenesis.</title>
        <authorList>
            <person name="Saller M.J."/>
            <person name="Fusetti F."/>
            <person name="Driessen A.J."/>
        </authorList>
    </citation>
    <scope>IDENTIFICATION BY MASS SPECTROMETRY</scope>
    <scope>INTERACTION WITH SPOIIIJ AND YQJG</scope>
    <source>
        <strain>168</strain>
    </source>
</reference>
<organism>
    <name type="scientific">Bacillus subtilis (strain 168)</name>
    <dbReference type="NCBI Taxonomy" id="224308"/>
    <lineage>
        <taxon>Bacteria</taxon>
        <taxon>Bacillati</taxon>
        <taxon>Bacillota</taxon>
        <taxon>Bacilli</taxon>
        <taxon>Bacillales</taxon>
        <taxon>Bacillaceae</taxon>
        <taxon>Bacillus</taxon>
    </lineage>
</organism>
<accession>P37815</accession>